<sequence length="221" mass="25250">MYAPIRSPITELNESTPSSIPVATSYATCSASFAKLVALLVDDMAGLSIVLSEIYIYFKLLFLIVITESIQNKLEDIVKEYKKRGIDLGIITNVDEVSLFFDTSQYAEAIKKKVIEIVRQSGTGRAKIDFKTNGYVIKFAIQRGYYNRNTIEKLKSLVDYLHEQKIRCGYEIKGDLIFVMSLTDFLQKISEDVKEKLKDERVKIASKQEYTKYIVVIKVEQ</sequence>
<comment type="subcellular location">
    <subcellularLocation>
        <location evidence="2">Host membrane</location>
        <topology evidence="2">Single-pass membrane protein</topology>
    </subcellularLocation>
</comment>
<reference key="1">
    <citation type="journal article" date="2003" name="Virology">
        <title>AFV1, a novel virus infecting hyperthermophilic archaea of the genus acidianus.</title>
        <authorList>
            <person name="Bettstetter M."/>
            <person name="Peng X."/>
            <person name="Garrett R.A."/>
            <person name="Prangishvili D."/>
        </authorList>
    </citation>
    <scope>NUCLEOTIDE SEQUENCE [GENOMIC DNA]</scope>
</reference>
<organism>
    <name type="scientific">Acidianus filamentous virus 1 (isolate United States/Yellowstone)</name>
    <name type="common">AFV-1</name>
    <dbReference type="NCBI Taxonomy" id="654909"/>
    <lineage>
        <taxon>Viruses</taxon>
        <taxon>Adnaviria</taxon>
        <taxon>Zilligvirae</taxon>
        <taxon>Taleaviricota</taxon>
        <taxon>Tokiviricetes</taxon>
        <taxon>Ligamenvirales</taxon>
        <taxon>Ungulaviridae</taxon>
        <taxon>Captovirus</taxon>
        <taxon>Acidianus filamentous virus 1</taxon>
    </lineage>
</organism>
<name>Y221_AFV1Y</name>
<keyword id="KW-1043">Host membrane</keyword>
<keyword id="KW-0472">Membrane</keyword>
<keyword id="KW-1185">Reference proteome</keyword>
<keyword id="KW-0812">Transmembrane</keyword>
<keyword id="KW-1133">Transmembrane helix</keyword>
<feature type="chain" id="PRO_0000384566" description="Uncharacterized protein ORF221">
    <location>
        <begin position="1"/>
        <end position="221"/>
    </location>
</feature>
<feature type="topological domain" description="Extracellular" evidence="1">
    <location>
        <begin position="1"/>
        <end position="45"/>
    </location>
</feature>
<feature type="transmembrane region" description="Helical" evidence="1">
    <location>
        <begin position="46"/>
        <end position="66"/>
    </location>
</feature>
<feature type="topological domain" description="Cytoplasmic" evidence="1">
    <location>
        <begin position="67"/>
        <end position="221"/>
    </location>
</feature>
<proteinExistence type="predicted"/>
<accession>Q70LC9</accession>
<evidence type="ECO:0000255" key="1"/>
<evidence type="ECO:0000305" key="2"/>
<protein>
    <recommendedName>
        <fullName>Uncharacterized protein ORF221</fullName>
    </recommendedName>
</protein>
<dbReference type="EMBL" id="AJ567472">
    <property type="protein sequence ID" value="CAD98951.1"/>
    <property type="molecule type" value="Genomic_DNA"/>
</dbReference>
<dbReference type="RefSeq" id="YP_003747.1">
    <property type="nucleotide sequence ID" value="NC_005830.1"/>
</dbReference>
<dbReference type="SMR" id="Q70LC9"/>
<dbReference type="KEGG" id="vg:2769186"/>
<dbReference type="Proteomes" id="UP000000514">
    <property type="component" value="Genome"/>
</dbReference>
<dbReference type="GO" id="GO:0033644">
    <property type="term" value="C:host cell membrane"/>
    <property type="evidence" value="ECO:0007669"/>
    <property type="project" value="UniProtKB-SubCell"/>
</dbReference>
<dbReference type="GO" id="GO:0016020">
    <property type="term" value="C:membrane"/>
    <property type="evidence" value="ECO:0007669"/>
    <property type="project" value="UniProtKB-KW"/>
</dbReference>
<organismHost>
    <name type="scientific">Acidianus hospitalis</name>
    <dbReference type="NCBI Taxonomy" id="563177"/>
</organismHost>
<organismHost>
    <name type="scientific">Acidianus infernus</name>
    <dbReference type="NCBI Taxonomy" id="12915"/>
</organismHost>
<gene>
    <name type="ORF">ORF221</name>
</gene>